<accession>Q1MGZ1</accession>
<organism>
    <name type="scientific">Rhizobium johnstonii (strain DSM 114642 / LMG 32736 / 3841)</name>
    <name type="common">Rhizobium leguminosarum bv. viciae</name>
    <dbReference type="NCBI Taxonomy" id="216596"/>
    <lineage>
        <taxon>Bacteria</taxon>
        <taxon>Pseudomonadati</taxon>
        <taxon>Pseudomonadota</taxon>
        <taxon>Alphaproteobacteria</taxon>
        <taxon>Hyphomicrobiales</taxon>
        <taxon>Rhizobiaceae</taxon>
        <taxon>Rhizobium/Agrobacterium group</taxon>
        <taxon>Rhizobium</taxon>
        <taxon>Rhizobium johnstonii</taxon>
    </lineage>
</organism>
<proteinExistence type="inferred from homology"/>
<dbReference type="EMBL" id="AM236080">
    <property type="protein sequence ID" value="CAK07776.1"/>
    <property type="molecule type" value="Genomic_DNA"/>
</dbReference>
<dbReference type="RefSeq" id="WP_003539403.1">
    <property type="nucleotide sequence ID" value="NC_008380.1"/>
</dbReference>
<dbReference type="SMR" id="Q1MGZ1"/>
<dbReference type="EnsemblBacteria" id="CAK07776">
    <property type="protein sequence ID" value="CAK07776"/>
    <property type="gene ID" value="RL2284"/>
</dbReference>
<dbReference type="GeneID" id="91148465"/>
<dbReference type="KEGG" id="rle:RL2284"/>
<dbReference type="eggNOG" id="COG1923">
    <property type="taxonomic scope" value="Bacteria"/>
</dbReference>
<dbReference type="HOGENOM" id="CLU_113688_0_0_5"/>
<dbReference type="Proteomes" id="UP000006575">
    <property type="component" value="Chromosome"/>
</dbReference>
<dbReference type="GO" id="GO:0005829">
    <property type="term" value="C:cytosol"/>
    <property type="evidence" value="ECO:0007669"/>
    <property type="project" value="TreeGrafter"/>
</dbReference>
<dbReference type="GO" id="GO:0003723">
    <property type="term" value="F:RNA binding"/>
    <property type="evidence" value="ECO:0007669"/>
    <property type="project" value="UniProtKB-UniRule"/>
</dbReference>
<dbReference type="GO" id="GO:0006355">
    <property type="term" value="P:regulation of DNA-templated transcription"/>
    <property type="evidence" value="ECO:0007669"/>
    <property type="project" value="InterPro"/>
</dbReference>
<dbReference type="GO" id="GO:0043487">
    <property type="term" value="P:regulation of RNA stability"/>
    <property type="evidence" value="ECO:0007669"/>
    <property type="project" value="TreeGrafter"/>
</dbReference>
<dbReference type="GO" id="GO:0045974">
    <property type="term" value="P:regulation of translation, ncRNA-mediated"/>
    <property type="evidence" value="ECO:0007669"/>
    <property type="project" value="TreeGrafter"/>
</dbReference>
<dbReference type="CDD" id="cd01716">
    <property type="entry name" value="Hfq"/>
    <property type="match status" value="1"/>
</dbReference>
<dbReference type="Gene3D" id="2.30.30.100">
    <property type="match status" value="1"/>
</dbReference>
<dbReference type="HAMAP" id="MF_00436">
    <property type="entry name" value="Hfq"/>
    <property type="match status" value="1"/>
</dbReference>
<dbReference type="InterPro" id="IPR005001">
    <property type="entry name" value="Hfq"/>
</dbReference>
<dbReference type="InterPro" id="IPR010920">
    <property type="entry name" value="LSM_dom_sf"/>
</dbReference>
<dbReference type="InterPro" id="IPR047575">
    <property type="entry name" value="Sm"/>
</dbReference>
<dbReference type="NCBIfam" id="TIGR02383">
    <property type="entry name" value="Hfq"/>
    <property type="match status" value="1"/>
</dbReference>
<dbReference type="NCBIfam" id="NF001602">
    <property type="entry name" value="PRK00395.1"/>
    <property type="match status" value="1"/>
</dbReference>
<dbReference type="PANTHER" id="PTHR34772">
    <property type="entry name" value="RNA-BINDING PROTEIN HFQ"/>
    <property type="match status" value="1"/>
</dbReference>
<dbReference type="PANTHER" id="PTHR34772:SF1">
    <property type="entry name" value="RNA-BINDING PROTEIN HFQ"/>
    <property type="match status" value="1"/>
</dbReference>
<dbReference type="Pfam" id="PF17209">
    <property type="entry name" value="Hfq"/>
    <property type="match status" value="1"/>
</dbReference>
<dbReference type="SUPFAM" id="SSF50182">
    <property type="entry name" value="Sm-like ribonucleoproteins"/>
    <property type="match status" value="1"/>
</dbReference>
<dbReference type="PROSITE" id="PS52002">
    <property type="entry name" value="SM"/>
    <property type="match status" value="1"/>
</dbReference>
<reference key="1">
    <citation type="journal article" date="2006" name="Genome Biol.">
        <title>The genome of Rhizobium leguminosarum has recognizable core and accessory components.</title>
        <authorList>
            <person name="Young J.P.W."/>
            <person name="Crossman L.C."/>
            <person name="Johnston A.W.B."/>
            <person name="Thomson N.R."/>
            <person name="Ghazoui Z.F."/>
            <person name="Hull K.H."/>
            <person name="Wexler M."/>
            <person name="Curson A.R.J."/>
            <person name="Todd J.D."/>
            <person name="Poole P.S."/>
            <person name="Mauchline T.H."/>
            <person name="East A.K."/>
            <person name="Quail M.A."/>
            <person name="Churcher C."/>
            <person name="Arrowsmith C."/>
            <person name="Cherevach I."/>
            <person name="Chillingworth T."/>
            <person name="Clarke K."/>
            <person name="Cronin A."/>
            <person name="Davis P."/>
            <person name="Fraser A."/>
            <person name="Hance Z."/>
            <person name="Hauser H."/>
            <person name="Jagels K."/>
            <person name="Moule S."/>
            <person name="Mungall K."/>
            <person name="Norbertczak H."/>
            <person name="Rabbinowitsch E."/>
            <person name="Sanders M."/>
            <person name="Simmonds M."/>
            <person name="Whitehead S."/>
            <person name="Parkhill J."/>
        </authorList>
    </citation>
    <scope>NUCLEOTIDE SEQUENCE [LARGE SCALE GENOMIC DNA]</scope>
    <source>
        <strain>DSM 114642 / LMG 32736 / 3841</strain>
    </source>
</reference>
<protein>
    <recommendedName>
        <fullName evidence="1">RNA-binding protein Hfq</fullName>
    </recommendedName>
</protein>
<evidence type="ECO:0000255" key="1">
    <source>
        <dbReference type="HAMAP-Rule" id="MF_00436"/>
    </source>
</evidence>
<evidence type="ECO:0000255" key="2">
    <source>
        <dbReference type="PROSITE-ProRule" id="PRU01346"/>
    </source>
</evidence>
<comment type="function">
    <text evidence="1">RNA chaperone that binds small regulatory RNA (sRNAs) and mRNAs to facilitate mRNA translational regulation in response to envelope stress, environmental stress and changes in metabolite concentrations. Also binds with high specificity to tRNAs.</text>
</comment>
<comment type="subunit">
    <text evidence="1">Homohexamer.</text>
</comment>
<comment type="similarity">
    <text evidence="1">Belongs to the Hfq family.</text>
</comment>
<sequence>MAERSQNLQDLFLNTVRKQKISLTIFLINGVKLTGVVTSFDNFCVLLRRDGHSQLVYKHAISTIMPGQPMQMFESEEAAS</sequence>
<gene>
    <name evidence="1" type="primary">hfq</name>
    <name type="ordered locus">RL2284</name>
</gene>
<feature type="chain" id="PRO_0000265180" description="RNA-binding protein Hfq">
    <location>
        <begin position="1"/>
        <end position="80"/>
    </location>
</feature>
<feature type="domain" description="Sm" evidence="2">
    <location>
        <begin position="10"/>
        <end position="70"/>
    </location>
</feature>
<keyword id="KW-0694">RNA-binding</keyword>
<keyword id="KW-0346">Stress response</keyword>
<name>HFQ_RHIJ3</name>